<accession>Q8WTQ4</accession>
<name>CP078_HUMAN</name>
<organism>
    <name type="scientific">Homo sapiens</name>
    <name type="common">Human</name>
    <dbReference type="NCBI Taxonomy" id="9606"/>
    <lineage>
        <taxon>Eukaryota</taxon>
        <taxon>Metazoa</taxon>
        <taxon>Chordata</taxon>
        <taxon>Craniata</taxon>
        <taxon>Vertebrata</taxon>
        <taxon>Euteleostomi</taxon>
        <taxon>Mammalia</taxon>
        <taxon>Eutheria</taxon>
        <taxon>Euarchontoglires</taxon>
        <taxon>Primates</taxon>
        <taxon>Haplorrhini</taxon>
        <taxon>Catarrhini</taxon>
        <taxon>Hominidae</taxon>
        <taxon>Homo</taxon>
    </lineage>
</organism>
<protein>
    <recommendedName>
        <fullName>Uncharacterized protein C16orf78</fullName>
    </recommendedName>
</protein>
<dbReference type="EMBL" id="BC021181">
    <property type="protein sequence ID" value="AAH21181.1"/>
    <property type="molecule type" value="mRNA"/>
</dbReference>
<dbReference type="EMBL" id="BC021718">
    <property type="protein sequence ID" value="AAH21718.1"/>
    <property type="molecule type" value="mRNA"/>
</dbReference>
<dbReference type="CCDS" id="CCDS10738.1"/>
<dbReference type="RefSeq" id="NP_653203.1">
    <property type="nucleotide sequence ID" value="NM_144602.4"/>
</dbReference>
<dbReference type="BioGRID" id="125845">
    <property type="interactions" value="4"/>
</dbReference>
<dbReference type="FunCoup" id="Q8WTQ4">
    <property type="interactions" value="24"/>
</dbReference>
<dbReference type="IntAct" id="Q8WTQ4">
    <property type="interactions" value="3"/>
</dbReference>
<dbReference type="STRING" id="9606.ENSP00000299191"/>
<dbReference type="GlyGen" id="Q8WTQ4">
    <property type="glycosylation" value="1 site, 1 O-linked glycan (1 site)"/>
</dbReference>
<dbReference type="iPTMnet" id="Q8WTQ4"/>
<dbReference type="PhosphoSitePlus" id="Q8WTQ4"/>
<dbReference type="BioMuta" id="C16orf78"/>
<dbReference type="DMDM" id="74730626"/>
<dbReference type="jPOST" id="Q8WTQ4"/>
<dbReference type="MassIVE" id="Q8WTQ4"/>
<dbReference type="PaxDb" id="9606-ENSP00000299191"/>
<dbReference type="PeptideAtlas" id="Q8WTQ4"/>
<dbReference type="ProteomicsDB" id="74582"/>
<dbReference type="TopDownProteomics" id="Q8WTQ4"/>
<dbReference type="Antibodypedia" id="28185">
    <property type="antibodies" value="61 antibodies from 13 providers"/>
</dbReference>
<dbReference type="DNASU" id="123970"/>
<dbReference type="Ensembl" id="ENST00000299191.4">
    <property type="protein sequence ID" value="ENSP00000299191.3"/>
    <property type="gene ID" value="ENSG00000166152.4"/>
</dbReference>
<dbReference type="GeneID" id="123970"/>
<dbReference type="KEGG" id="hsa:123970"/>
<dbReference type="MANE-Select" id="ENST00000299191.4">
    <property type="protein sequence ID" value="ENSP00000299191.3"/>
    <property type="RefSeq nucleotide sequence ID" value="NM_144602.4"/>
    <property type="RefSeq protein sequence ID" value="NP_653203.1"/>
</dbReference>
<dbReference type="UCSC" id="uc002efr.4">
    <property type="organism name" value="human"/>
</dbReference>
<dbReference type="AGR" id="HGNC:28479"/>
<dbReference type="CTD" id="123970"/>
<dbReference type="GeneCards" id="C16orf78"/>
<dbReference type="HGNC" id="HGNC:28479">
    <property type="gene designation" value="C16orf78"/>
</dbReference>
<dbReference type="HPA" id="ENSG00000166152">
    <property type="expression patterns" value="Tissue enriched (testis)"/>
</dbReference>
<dbReference type="neXtProt" id="NX_Q8WTQ4"/>
<dbReference type="OpenTargets" id="ENSG00000166152"/>
<dbReference type="PharmGKB" id="PA147358456"/>
<dbReference type="VEuPathDB" id="HostDB:ENSG00000166152"/>
<dbReference type="eggNOG" id="ENOG502SG7H">
    <property type="taxonomic scope" value="Eukaryota"/>
</dbReference>
<dbReference type="GeneTree" id="ENSGT00390000014556"/>
<dbReference type="HOGENOM" id="CLU_093507_0_0_1"/>
<dbReference type="InParanoid" id="Q8WTQ4"/>
<dbReference type="OMA" id="TERKSMW"/>
<dbReference type="OrthoDB" id="10071349at2759"/>
<dbReference type="PAN-GO" id="Q8WTQ4">
    <property type="GO annotations" value="0 GO annotations based on evolutionary models"/>
</dbReference>
<dbReference type="PhylomeDB" id="Q8WTQ4"/>
<dbReference type="TreeFam" id="TF328628"/>
<dbReference type="PathwayCommons" id="Q8WTQ4"/>
<dbReference type="SignaLink" id="Q8WTQ4"/>
<dbReference type="BioGRID-ORCS" id="123970">
    <property type="hits" value="19 hits in 1114 CRISPR screens"/>
</dbReference>
<dbReference type="GenomeRNAi" id="123970"/>
<dbReference type="Pharos" id="Q8WTQ4">
    <property type="development level" value="Tdark"/>
</dbReference>
<dbReference type="PRO" id="PR:Q8WTQ4"/>
<dbReference type="Proteomes" id="UP000005640">
    <property type="component" value="Chromosome 16"/>
</dbReference>
<dbReference type="RNAct" id="Q8WTQ4">
    <property type="molecule type" value="protein"/>
</dbReference>
<dbReference type="Bgee" id="ENSG00000166152">
    <property type="expression patterns" value="Expressed in sperm and 33 other cell types or tissues"/>
</dbReference>
<dbReference type="GO" id="GO:0005634">
    <property type="term" value="C:nucleus"/>
    <property type="evidence" value="ECO:0007005"/>
    <property type="project" value="UniProtKB"/>
</dbReference>
<dbReference type="InterPro" id="IPR029171">
    <property type="entry name" value="DUF4638"/>
</dbReference>
<dbReference type="PANTHER" id="PTHR35679">
    <property type="entry name" value="RIKEN CDNA 4933402J07 GENE"/>
    <property type="match status" value="1"/>
</dbReference>
<dbReference type="PANTHER" id="PTHR35679:SF1">
    <property type="entry name" value="RIKEN CDNA 4933402J07 GENE"/>
    <property type="match status" value="1"/>
</dbReference>
<dbReference type="Pfam" id="PF15472">
    <property type="entry name" value="DUF4638"/>
    <property type="match status" value="1"/>
</dbReference>
<keyword id="KW-1267">Proteomics identification</keyword>
<keyword id="KW-1185">Reference proteome</keyword>
<sequence length="265" mass="30819">MSEQQMDLKDLMPTKRKYMWKTAEDRRMSDLTCVLEWLERRQGKKKQAPEKQKPKVVTVLKRNKKKEEKKGKGLMTARGGNRRDTETSQQALGKRFRKDAASYRSLYGVEQKGKHLSMVPGSYIKDGPKKSDTDIKDAVDPESTQRPNPFRRQSIVLDPMLQEGTFNSQRATFIRDWSNKMPDMAYERKLKSLMEKSTEPKMETMRMLKPEEVLSCRYLRLSKENIRTLLKLCKDAGMNVDIHPHMVEEDIDAKKVFTGIPSMAL</sequence>
<evidence type="ECO:0000256" key="1">
    <source>
        <dbReference type="SAM" id="MobiDB-lite"/>
    </source>
</evidence>
<gene>
    <name type="primary">C16orf78</name>
</gene>
<feature type="chain" id="PRO_0000296625" description="Uncharacterized protein C16orf78">
    <location>
        <begin position="1"/>
        <end position="265"/>
    </location>
</feature>
<feature type="region of interest" description="Disordered" evidence="1">
    <location>
        <begin position="62"/>
        <end position="94"/>
    </location>
</feature>
<feature type="region of interest" description="Disordered" evidence="1">
    <location>
        <begin position="118"/>
        <end position="149"/>
    </location>
</feature>
<feature type="compositionally biased region" description="Basic and acidic residues" evidence="1">
    <location>
        <begin position="126"/>
        <end position="139"/>
    </location>
</feature>
<feature type="sequence variant" id="VAR_034632" description="In dbSNP:rs16947350.">
    <original>R</original>
    <variation>Q</variation>
    <location>
        <position position="152"/>
    </location>
</feature>
<proteinExistence type="evidence at protein level"/>
<reference key="1">
    <citation type="journal article" date="2004" name="Genome Res.">
        <title>The status, quality, and expansion of the NIH full-length cDNA project: the Mammalian Gene Collection (MGC).</title>
        <authorList>
            <consortium name="The MGC Project Team"/>
        </authorList>
    </citation>
    <scope>NUCLEOTIDE SEQUENCE [LARGE SCALE MRNA]</scope>
    <source>
        <tissue>Testis</tissue>
    </source>
</reference>